<evidence type="ECO:0000255" key="1">
    <source>
        <dbReference type="HAMAP-Rule" id="MF_00075"/>
    </source>
</evidence>
<proteinExistence type="inferred from homology"/>
<accession>Q3JMT4</accession>
<name>IF12_BURP1</name>
<keyword id="KW-0963">Cytoplasm</keyword>
<keyword id="KW-0396">Initiation factor</keyword>
<keyword id="KW-0648">Protein biosynthesis</keyword>
<keyword id="KW-0694">RNA-binding</keyword>
<keyword id="KW-0699">rRNA-binding</keyword>
<sequence>MAKDDVIQMQGEVIENLPNATFRVKLENGHVVLGHISGKMRMHYIRILPGDKVTVELTPYDLSRARIVFRAK</sequence>
<organism>
    <name type="scientific">Burkholderia pseudomallei (strain 1710b)</name>
    <dbReference type="NCBI Taxonomy" id="320372"/>
    <lineage>
        <taxon>Bacteria</taxon>
        <taxon>Pseudomonadati</taxon>
        <taxon>Pseudomonadota</taxon>
        <taxon>Betaproteobacteria</taxon>
        <taxon>Burkholderiales</taxon>
        <taxon>Burkholderiaceae</taxon>
        <taxon>Burkholderia</taxon>
        <taxon>pseudomallei group</taxon>
    </lineage>
</organism>
<dbReference type="EMBL" id="CP000124">
    <property type="protein sequence ID" value="ABA49847.1"/>
    <property type="molecule type" value="Genomic_DNA"/>
</dbReference>
<dbReference type="SMR" id="Q3JMT4"/>
<dbReference type="EnsemblBacteria" id="ABA49847">
    <property type="protein sequence ID" value="ABA49847"/>
    <property type="gene ID" value="BURPS1710b_3755"/>
</dbReference>
<dbReference type="KEGG" id="bpm:BURPS1710b_3755"/>
<dbReference type="HOGENOM" id="CLU_151267_1_0_4"/>
<dbReference type="Proteomes" id="UP000002700">
    <property type="component" value="Chromosome I"/>
</dbReference>
<dbReference type="GO" id="GO:0005829">
    <property type="term" value="C:cytosol"/>
    <property type="evidence" value="ECO:0007669"/>
    <property type="project" value="TreeGrafter"/>
</dbReference>
<dbReference type="GO" id="GO:0043022">
    <property type="term" value="F:ribosome binding"/>
    <property type="evidence" value="ECO:0007669"/>
    <property type="project" value="UniProtKB-UniRule"/>
</dbReference>
<dbReference type="GO" id="GO:0019843">
    <property type="term" value="F:rRNA binding"/>
    <property type="evidence" value="ECO:0007669"/>
    <property type="project" value="UniProtKB-UniRule"/>
</dbReference>
<dbReference type="GO" id="GO:0003743">
    <property type="term" value="F:translation initiation factor activity"/>
    <property type="evidence" value="ECO:0007669"/>
    <property type="project" value="UniProtKB-UniRule"/>
</dbReference>
<dbReference type="CDD" id="cd04451">
    <property type="entry name" value="S1_IF1"/>
    <property type="match status" value="1"/>
</dbReference>
<dbReference type="FunFam" id="2.40.50.140:FF:000002">
    <property type="entry name" value="Translation initiation factor IF-1"/>
    <property type="match status" value="1"/>
</dbReference>
<dbReference type="Gene3D" id="2.40.50.140">
    <property type="entry name" value="Nucleic acid-binding proteins"/>
    <property type="match status" value="1"/>
</dbReference>
<dbReference type="HAMAP" id="MF_00075">
    <property type="entry name" value="IF_1"/>
    <property type="match status" value="1"/>
</dbReference>
<dbReference type="InterPro" id="IPR012340">
    <property type="entry name" value="NA-bd_OB-fold"/>
</dbReference>
<dbReference type="InterPro" id="IPR006196">
    <property type="entry name" value="RNA-binding_domain_S1_IF1"/>
</dbReference>
<dbReference type="InterPro" id="IPR003029">
    <property type="entry name" value="S1_domain"/>
</dbReference>
<dbReference type="InterPro" id="IPR004368">
    <property type="entry name" value="TIF_IF1"/>
</dbReference>
<dbReference type="NCBIfam" id="TIGR00008">
    <property type="entry name" value="infA"/>
    <property type="match status" value="1"/>
</dbReference>
<dbReference type="PANTHER" id="PTHR33370">
    <property type="entry name" value="TRANSLATION INITIATION FACTOR IF-1, CHLOROPLASTIC"/>
    <property type="match status" value="1"/>
</dbReference>
<dbReference type="PANTHER" id="PTHR33370:SF1">
    <property type="entry name" value="TRANSLATION INITIATION FACTOR IF-1, CHLOROPLASTIC"/>
    <property type="match status" value="1"/>
</dbReference>
<dbReference type="Pfam" id="PF01176">
    <property type="entry name" value="eIF-1a"/>
    <property type="match status" value="1"/>
</dbReference>
<dbReference type="SMART" id="SM00316">
    <property type="entry name" value="S1"/>
    <property type="match status" value="1"/>
</dbReference>
<dbReference type="SUPFAM" id="SSF50249">
    <property type="entry name" value="Nucleic acid-binding proteins"/>
    <property type="match status" value="1"/>
</dbReference>
<dbReference type="PROSITE" id="PS50832">
    <property type="entry name" value="S1_IF1_TYPE"/>
    <property type="match status" value="1"/>
</dbReference>
<comment type="function">
    <text evidence="1">One of the essential components for the initiation of protein synthesis. Stabilizes the binding of IF-2 and IF-3 on the 30S subunit to which N-formylmethionyl-tRNA(fMet) subsequently binds. Helps modulate mRNA selection, yielding the 30S pre-initiation complex (PIC). Upon addition of the 50S ribosomal subunit IF-1, IF-2 and IF-3 are released leaving the mature 70S translation initiation complex.</text>
</comment>
<comment type="subunit">
    <text evidence="1">Component of the 30S ribosomal translation pre-initiation complex which assembles on the 30S ribosome in the order IF-2 and IF-3, IF-1 and N-formylmethionyl-tRNA(fMet); mRNA recruitment can occur at any time during PIC assembly.</text>
</comment>
<comment type="subcellular location">
    <subcellularLocation>
        <location evidence="1">Cytoplasm</location>
    </subcellularLocation>
</comment>
<comment type="similarity">
    <text evidence="1">Belongs to the IF-1 family.</text>
</comment>
<protein>
    <recommendedName>
        <fullName evidence="1">Translation initiation factor IF-1 2</fullName>
    </recommendedName>
</protein>
<feature type="chain" id="PRO_0000263774" description="Translation initiation factor IF-1 2">
    <location>
        <begin position="1"/>
        <end position="72"/>
    </location>
</feature>
<feature type="domain" description="S1-like" evidence="1">
    <location>
        <begin position="1"/>
        <end position="72"/>
    </location>
</feature>
<reference key="1">
    <citation type="journal article" date="2010" name="Genome Biol. Evol.">
        <title>Continuing evolution of Burkholderia mallei through genome reduction and large-scale rearrangements.</title>
        <authorList>
            <person name="Losada L."/>
            <person name="Ronning C.M."/>
            <person name="DeShazer D."/>
            <person name="Woods D."/>
            <person name="Fedorova N."/>
            <person name="Kim H.S."/>
            <person name="Shabalina S.A."/>
            <person name="Pearson T.R."/>
            <person name="Brinkac L."/>
            <person name="Tan P."/>
            <person name="Nandi T."/>
            <person name="Crabtree J."/>
            <person name="Badger J."/>
            <person name="Beckstrom-Sternberg S."/>
            <person name="Saqib M."/>
            <person name="Schutzer S.E."/>
            <person name="Keim P."/>
            <person name="Nierman W.C."/>
        </authorList>
    </citation>
    <scope>NUCLEOTIDE SEQUENCE [LARGE SCALE GENOMIC DNA]</scope>
    <source>
        <strain>1710b</strain>
    </source>
</reference>
<gene>
    <name evidence="1" type="primary">infA2</name>
    <name type="ordered locus">BURPS1710b_3755</name>
</gene>